<reference key="1">
    <citation type="submission" date="2008-02" db="EMBL/GenBank/DDBJ databases">
        <title>Complete sequence of chromosome of Methylobacterium sp. 4-46.</title>
        <authorList>
            <consortium name="US DOE Joint Genome Institute"/>
            <person name="Copeland A."/>
            <person name="Lucas S."/>
            <person name="Lapidus A."/>
            <person name="Glavina del Rio T."/>
            <person name="Dalin E."/>
            <person name="Tice H."/>
            <person name="Bruce D."/>
            <person name="Goodwin L."/>
            <person name="Pitluck S."/>
            <person name="Chertkov O."/>
            <person name="Brettin T."/>
            <person name="Detter J.C."/>
            <person name="Han C."/>
            <person name="Kuske C.R."/>
            <person name="Schmutz J."/>
            <person name="Larimer F."/>
            <person name="Land M."/>
            <person name="Hauser L."/>
            <person name="Kyrpides N."/>
            <person name="Ivanova N."/>
            <person name="Marx C.J."/>
            <person name="Richardson P."/>
        </authorList>
    </citation>
    <scope>NUCLEOTIDE SEQUENCE [LARGE SCALE GENOMIC DNA]</scope>
    <source>
        <strain>4-46</strain>
    </source>
</reference>
<evidence type="ECO:0000255" key="1">
    <source>
        <dbReference type="HAMAP-Rule" id="MF_01224"/>
    </source>
</evidence>
<feature type="chain" id="PRO_1000139280" description="Cyclic pyranopterin monophosphate synthase">
    <location>
        <begin position="1"/>
        <end position="160"/>
    </location>
</feature>
<feature type="active site" evidence="1">
    <location>
        <position position="128"/>
    </location>
</feature>
<feature type="binding site" evidence="1">
    <location>
        <begin position="75"/>
        <end position="77"/>
    </location>
    <ligand>
        <name>substrate</name>
    </ligand>
</feature>
<feature type="binding site" evidence="1">
    <location>
        <begin position="113"/>
        <end position="114"/>
    </location>
    <ligand>
        <name>substrate</name>
    </ligand>
</feature>
<proteinExistence type="inferred from homology"/>
<organism>
    <name type="scientific">Methylobacterium sp. (strain 4-46)</name>
    <dbReference type="NCBI Taxonomy" id="426117"/>
    <lineage>
        <taxon>Bacteria</taxon>
        <taxon>Pseudomonadati</taxon>
        <taxon>Pseudomonadota</taxon>
        <taxon>Alphaproteobacteria</taxon>
        <taxon>Hyphomicrobiales</taxon>
        <taxon>Methylobacteriaceae</taxon>
        <taxon>Methylobacterium</taxon>
    </lineage>
</organism>
<gene>
    <name evidence="1" type="primary">moaC</name>
    <name type="ordered locus">M446_5393</name>
</gene>
<comment type="function">
    <text evidence="1">Catalyzes the conversion of (8S)-3',8-cyclo-7,8-dihydroguanosine 5'-triphosphate to cyclic pyranopterin monophosphate (cPMP).</text>
</comment>
<comment type="catalytic activity">
    <reaction evidence="1">
        <text>(8S)-3',8-cyclo-7,8-dihydroguanosine 5'-triphosphate = cyclic pyranopterin phosphate + diphosphate</text>
        <dbReference type="Rhea" id="RHEA:49580"/>
        <dbReference type="ChEBI" id="CHEBI:33019"/>
        <dbReference type="ChEBI" id="CHEBI:59648"/>
        <dbReference type="ChEBI" id="CHEBI:131766"/>
        <dbReference type="EC" id="4.6.1.17"/>
    </reaction>
</comment>
<comment type="pathway">
    <text evidence="1">Cofactor biosynthesis; molybdopterin biosynthesis.</text>
</comment>
<comment type="subunit">
    <text evidence="1">Homohexamer; trimer of dimers.</text>
</comment>
<comment type="similarity">
    <text evidence="1">Belongs to the MoaC family.</text>
</comment>
<dbReference type="EC" id="4.6.1.17" evidence="1"/>
<dbReference type="EMBL" id="CP000943">
    <property type="protein sequence ID" value="ACA19709.1"/>
    <property type="molecule type" value="Genomic_DNA"/>
</dbReference>
<dbReference type="RefSeq" id="WP_012335094.1">
    <property type="nucleotide sequence ID" value="NC_010511.1"/>
</dbReference>
<dbReference type="SMR" id="B0U7Z3"/>
<dbReference type="STRING" id="426117.M446_5393"/>
<dbReference type="KEGG" id="met:M446_5393"/>
<dbReference type="eggNOG" id="COG0315">
    <property type="taxonomic scope" value="Bacteria"/>
</dbReference>
<dbReference type="HOGENOM" id="CLU_074693_1_1_5"/>
<dbReference type="UniPathway" id="UPA00344"/>
<dbReference type="GO" id="GO:0061799">
    <property type="term" value="F:cyclic pyranopterin monophosphate synthase activity"/>
    <property type="evidence" value="ECO:0007669"/>
    <property type="project" value="UniProtKB-UniRule"/>
</dbReference>
<dbReference type="GO" id="GO:0006777">
    <property type="term" value="P:Mo-molybdopterin cofactor biosynthetic process"/>
    <property type="evidence" value="ECO:0007669"/>
    <property type="project" value="UniProtKB-UniRule"/>
</dbReference>
<dbReference type="CDD" id="cd01420">
    <property type="entry name" value="MoaC_PE"/>
    <property type="match status" value="1"/>
</dbReference>
<dbReference type="Gene3D" id="3.30.70.640">
    <property type="entry name" value="Molybdopterin cofactor biosynthesis C (MoaC) domain"/>
    <property type="match status" value="1"/>
</dbReference>
<dbReference type="HAMAP" id="MF_01224_B">
    <property type="entry name" value="MoaC_B"/>
    <property type="match status" value="1"/>
</dbReference>
<dbReference type="InterPro" id="IPR023045">
    <property type="entry name" value="MoaC"/>
</dbReference>
<dbReference type="InterPro" id="IPR047594">
    <property type="entry name" value="MoaC_bact/euk"/>
</dbReference>
<dbReference type="InterPro" id="IPR036522">
    <property type="entry name" value="MoaC_sf"/>
</dbReference>
<dbReference type="InterPro" id="IPR050105">
    <property type="entry name" value="MoCo_biosynth_MoaA/MoaC"/>
</dbReference>
<dbReference type="InterPro" id="IPR002820">
    <property type="entry name" value="Mopterin_CF_biosynth-C_dom"/>
</dbReference>
<dbReference type="NCBIfam" id="TIGR00581">
    <property type="entry name" value="moaC"/>
    <property type="match status" value="1"/>
</dbReference>
<dbReference type="NCBIfam" id="NF006870">
    <property type="entry name" value="PRK09364.1"/>
    <property type="match status" value="1"/>
</dbReference>
<dbReference type="PANTHER" id="PTHR22960">
    <property type="entry name" value="MOLYBDOPTERIN COFACTOR SYNTHESIS PROTEIN A"/>
    <property type="match status" value="1"/>
</dbReference>
<dbReference type="Pfam" id="PF01967">
    <property type="entry name" value="MoaC"/>
    <property type="match status" value="1"/>
</dbReference>
<dbReference type="SUPFAM" id="SSF55040">
    <property type="entry name" value="Molybdenum cofactor biosynthesis protein C, MoaC"/>
    <property type="match status" value="1"/>
</dbReference>
<name>MOAC_METS4</name>
<protein>
    <recommendedName>
        <fullName evidence="1">Cyclic pyranopterin monophosphate synthase</fullName>
        <ecNumber evidence="1">4.6.1.17</ecNumber>
    </recommendedName>
    <alternativeName>
        <fullName evidence="1">Molybdenum cofactor biosynthesis protein C</fullName>
    </alternativeName>
</protein>
<keyword id="KW-0456">Lyase</keyword>
<keyword id="KW-0501">Molybdenum cofactor biosynthesis</keyword>
<accession>B0U7Z3</accession>
<sequence>MASLTHLDATGAANMVDVSDKAATARTARAEGAIVMRPETLRLIREGDAKKGDVLGTARLAGIMAAKRTHDLIPLCHPLLLSKVRVECEPDAALPGIRITAEVRVQGPTGVEMEALTAVSVACLTVYDMVKAADRGMRIEGIRLLEKSGGRSGSYAADPA</sequence>